<keyword id="KW-0002">3D-structure</keyword>
<keyword id="KW-0027">Amidation</keyword>
<keyword id="KW-0165">Cleavage on pair of basic residues</keyword>
<keyword id="KW-0325">Glycoprotein</keyword>
<keyword id="KW-0372">Hormone</keyword>
<keyword id="KW-0654">Proteoglycan</keyword>
<keyword id="KW-1267">Proteomics identification</keyword>
<keyword id="KW-1185">Reference proteome</keyword>
<keyword id="KW-0964">Secreted</keyword>
<keyword id="KW-0732">Signal</keyword>
<keyword id="KW-0765">Sulfation</keyword>
<reference key="1">
    <citation type="journal article" date="1985" name="Ann. N. Y. Acad. Sci.">
        <title>Molecular cloning of the human cholecystokinin gene.</title>
        <authorList>
            <person name="Kato K."/>
            <person name="Takahashi Y."/>
            <person name="Matsubara K."/>
        </authorList>
    </citation>
    <scope>NUCLEOTIDE SEQUENCE [MRNA]</scope>
</reference>
<reference key="2">
    <citation type="journal article" date="1985" name="Proc. Natl. Acad. Sci. U.S.A.">
        <title>Molecular cloning of the human cholecystokinin gene by use of a synthetic probe containing deoxyinosine.</title>
        <authorList>
            <person name="Takahashi Y."/>
            <person name="Kato K."/>
            <person name="Hayashizaki Y."/>
            <person name="Wakabayashi T."/>
            <person name="Ohtsuka E."/>
            <person name="Matsuki S."/>
            <person name="Ikehara M."/>
            <person name="Matsubara K."/>
        </authorList>
    </citation>
    <scope>NUCLEOTIDE SEQUENCE [GENOMIC DNA]</scope>
    <scope>AMIDATION AT PHE-103</scope>
</reference>
<reference key="3">
    <citation type="submission" date="2003-05" db="EMBL/GenBank/DDBJ databases">
        <title>Cloning of human full-length CDSs in BD Creator(TM) system donor vector.</title>
        <authorList>
            <person name="Kalnine N."/>
            <person name="Chen X."/>
            <person name="Rolfs A."/>
            <person name="Halleck A."/>
            <person name="Hines L."/>
            <person name="Eisenstein S."/>
            <person name="Koundinya M."/>
            <person name="Raphael J."/>
            <person name="Moreira D."/>
            <person name="Kelley T."/>
            <person name="LaBaer J."/>
            <person name="Lin Y."/>
            <person name="Phelan M."/>
            <person name="Farmer A."/>
        </authorList>
    </citation>
    <scope>NUCLEOTIDE SEQUENCE [LARGE SCALE MRNA]</scope>
</reference>
<reference key="4">
    <citation type="submission" date="2003-12" db="EMBL/GenBank/DDBJ databases">
        <authorList>
            <consortium name="NIEHS SNPs program"/>
        </authorList>
    </citation>
    <scope>NUCLEOTIDE SEQUENCE [GENOMIC DNA]</scope>
    <scope>VARIANT GLU-32</scope>
</reference>
<reference key="5">
    <citation type="journal article" date="2004" name="Genome Res.">
        <title>The status, quality, and expansion of the NIH full-length cDNA project: the Mammalian Gene Collection (MGC).</title>
        <authorList>
            <consortium name="The MGC Project Team"/>
        </authorList>
    </citation>
    <scope>NUCLEOTIDE SEQUENCE [LARGE SCALE MRNA]</scope>
    <source>
        <tissue>Pancreas</tissue>
    </source>
</reference>
<reference key="6">
    <citation type="journal article" date="1997" name="Biochem. J.">
        <title>Cleavage of arginyl-arginine and lysyl-arginine from the C-terminus of pro-hormone peptides by human germinal angiotensin I-converting enzyme (ACE) and the C-domain of human somatic ACE.</title>
        <authorList>
            <person name="Isaac R.E."/>
            <person name="Williams T.A."/>
            <person name="Sajid M."/>
            <person name="Corvol P."/>
            <person name="Coates D."/>
        </authorList>
    </citation>
    <scope>PROTEOLYTIC CLEAVAGE (CHOLECYSTOKININ-5)</scope>
</reference>
<reference key="7">
    <citation type="journal article" date="1999" name="Eur. J. Biochem.">
        <title>Hydrolysis by somatic angiotensin-I converting enzyme of basic dipeptides from a cholecystokinin/gastrin and a LH-RH peptide extended at the C-terminus with gly-Arg/Lys-arg, but not from diarginyl insulin.</title>
        <authorList>
            <person name="Isaac R.E."/>
            <person name="Michaud A."/>
            <person name="Keen J.N."/>
            <person name="Williams T.A."/>
            <person name="Coates D."/>
            <person name="Wetsel W.C."/>
            <person name="Corvol P."/>
        </authorList>
    </citation>
    <scope>PROTEOLYTIC CLEAVAGE (CHOLECYSTOKININ-5)</scope>
</reference>
<reference key="8">
    <citation type="journal article" date="2000" name="Biochemistry">
        <title>Role of tyrosine sulfation and serine phosphorylation in the processing of procholecystokinin to amidated cholecystokinin and its secretion in transfected AtT-20 cells.</title>
        <authorList>
            <person name="Vishnuvardhan D."/>
            <person name="Beinfeld M.C."/>
        </authorList>
    </citation>
    <scope>MUTAGENESIS OF TYR-97</scope>
    <scope>SULFATION AT TYR-97</scope>
</reference>
<reference key="9">
    <citation type="journal article" date="2015" name="Mol. Cell. Proteomics">
        <title>Identification of chondroitin sulfate linkage region glycopeptides reveals prohormones as a novel class of proteoglycans.</title>
        <authorList>
            <person name="Noborn F."/>
            <person name="Gomez Toledo A."/>
            <person name="Sihlbom C."/>
            <person name="Lengqvist J."/>
            <person name="Fries E."/>
            <person name="Kjellen L."/>
            <person name="Nilsson J."/>
            <person name="Larson G."/>
        </authorList>
    </citation>
    <scope>SUBCELLULAR LOCATION</scope>
    <scope>TISSUE SPECIFICITY</scope>
    <scope>GLYCOSYLATION AT SER-31</scope>
</reference>
<reference key="10">
    <citation type="journal article" date="2023" name="Mol. Cell. Proteomics">
        <title>Mapping the Human Chondroitin Sulfate Glycoproteome Reveals an Unexpected Correlation Between Glycan Sulfation and Attachment Site Characteristics.</title>
        <authorList>
            <person name="Noborn F."/>
            <person name="Nilsson J."/>
            <person name="Sihlbom C."/>
            <person name="Nikpour M."/>
            <person name="Kjellen L."/>
            <person name="Larson G."/>
        </authorList>
    </citation>
    <scope>SUBCELLULAR LOCATION</scope>
    <scope>TISSUE SPECIFICITY</scope>
    <scope>GLYCOSYLATION AT SER-31</scope>
</reference>
<dbReference type="EMBL" id="L00354">
    <property type="protein sequence ID" value="AAA53094.1"/>
    <property type="molecule type" value="Genomic_DNA"/>
</dbReference>
<dbReference type="EMBL" id="BT006991">
    <property type="protein sequence ID" value="AAP35637.1"/>
    <property type="molecule type" value="mRNA"/>
</dbReference>
<dbReference type="EMBL" id="AY514491">
    <property type="protein sequence ID" value="AAR89908.1"/>
    <property type="molecule type" value="Genomic_DNA"/>
</dbReference>
<dbReference type="EMBL" id="BC008283">
    <property type="protein sequence ID" value="AAH08283.1"/>
    <property type="molecule type" value="mRNA"/>
</dbReference>
<dbReference type="CCDS" id="CCDS2696.1"/>
<dbReference type="PIR" id="A01623">
    <property type="entry name" value="GMHUCP"/>
</dbReference>
<dbReference type="RefSeq" id="NP_000720.1">
    <property type="nucleotide sequence ID" value="NM_000729.6"/>
</dbReference>
<dbReference type="RefSeq" id="NP_001167609.1">
    <property type="nucleotide sequence ID" value="NM_001174138.3"/>
</dbReference>
<dbReference type="PDB" id="7EZH">
    <property type="method" value="EM"/>
    <property type="resolution" value="3.20 A"/>
    <property type="chains" value="P=96-103"/>
</dbReference>
<dbReference type="PDB" id="7EZK">
    <property type="method" value="EM"/>
    <property type="resolution" value="3.10 A"/>
    <property type="chains" value="P=96-103"/>
</dbReference>
<dbReference type="PDB" id="7EZM">
    <property type="method" value="EM"/>
    <property type="resolution" value="2.90 A"/>
    <property type="chains" value="P=96-103"/>
</dbReference>
<dbReference type="PDB" id="7MBX">
    <property type="method" value="EM"/>
    <property type="resolution" value="1.95 A"/>
    <property type="chains" value="P=96-103"/>
</dbReference>
<dbReference type="PDB" id="7MBY">
    <property type="method" value="EM"/>
    <property type="resolution" value="2.44 A"/>
    <property type="chains" value="P=96-103"/>
</dbReference>
<dbReference type="PDB" id="7XOU">
    <property type="method" value="EM"/>
    <property type="resolution" value="3.20 A"/>
    <property type="chains" value="L=96-103"/>
</dbReference>
<dbReference type="PDB" id="8IA7">
    <property type="method" value="EM"/>
    <property type="resolution" value="3.10 A"/>
    <property type="chains" value="L=96-103"/>
</dbReference>
<dbReference type="PDB" id="9BKJ">
    <property type="method" value="EM"/>
    <property type="resolution" value="2.59 A"/>
    <property type="chains" value="P=96-103"/>
</dbReference>
<dbReference type="PDB" id="9BKK">
    <property type="method" value="EM"/>
    <property type="resolution" value="2.51 A"/>
    <property type="chains" value="P=96-103"/>
</dbReference>
<dbReference type="PDBsum" id="7EZH"/>
<dbReference type="PDBsum" id="7EZK"/>
<dbReference type="PDBsum" id="7EZM"/>
<dbReference type="PDBsum" id="7MBX"/>
<dbReference type="PDBsum" id="7MBY"/>
<dbReference type="PDBsum" id="7XOU"/>
<dbReference type="PDBsum" id="8IA7"/>
<dbReference type="PDBsum" id="9BKJ"/>
<dbReference type="PDBsum" id="9BKK"/>
<dbReference type="EMDB" id="EMD-23749"/>
<dbReference type="EMDB" id="EMD-23750"/>
<dbReference type="EMDB" id="EMD-31387"/>
<dbReference type="EMDB" id="EMD-31388"/>
<dbReference type="EMDB" id="EMD-31389"/>
<dbReference type="EMDB" id="EMD-33359"/>
<dbReference type="EMDB" id="EMD-35297"/>
<dbReference type="EMDB" id="EMD-44642"/>
<dbReference type="EMDB" id="EMD-44643"/>
<dbReference type="SMR" id="P06307"/>
<dbReference type="BioGRID" id="107327">
    <property type="interactions" value="13"/>
</dbReference>
<dbReference type="FunCoup" id="P06307">
    <property type="interactions" value="434"/>
</dbReference>
<dbReference type="IntAct" id="P06307">
    <property type="interactions" value="57"/>
</dbReference>
<dbReference type="STRING" id="9606.ENSP00000379472"/>
<dbReference type="BindingDB" id="P06307"/>
<dbReference type="ChEMBL" id="CHEMBL1649050"/>
<dbReference type="DrugBank" id="DB13729">
    <property type="generic name" value="Camostat"/>
</dbReference>
<dbReference type="GlyGen" id="P06307">
    <property type="glycosylation" value="1 site"/>
</dbReference>
<dbReference type="iPTMnet" id="P06307"/>
<dbReference type="PhosphoSitePlus" id="P06307"/>
<dbReference type="BioMuta" id="CCK"/>
<dbReference type="DMDM" id="115945"/>
<dbReference type="jPOST" id="P06307"/>
<dbReference type="MassIVE" id="P06307"/>
<dbReference type="PaxDb" id="9606-ENSP00000379472"/>
<dbReference type="PeptideAtlas" id="P06307"/>
<dbReference type="ProteomicsDB" id="51882"/>
<dbReference type="Antibodypedia" id="29187">
    <property type="antibodies" value="249 antibodies from 34 providers"/>
</dbReference>
<dbReference type="DNASU" id="885"/>
<dbReference type="Ensembl" id="ENST00000334681.9">
    <property type="protein sequence ID" value="ENSP00000335657.5"/>
    <property type="gene ID" value="ENSG00000187094.12"/>
</dbReference>
<dbReference type="Ensembl" id="ENST00000396169.7">
    <property type="protein sequence ID" value="ENSP00000379472.2"/>
    <property type="gene ID" value="ENSG00000187094.12"/>
</dbReference>
<dbReference type="Ensembl" id="ENST00000434608.1">
    <property type="protein sequence ID" value="ENSP00000409124.1"/>
    <property type="gene ID" value="ENSG00000187094.12"/>
</dbReference>
<dbReference type="GeneID" id="885"/>
<dbReference type="KEGG" id="hsa:885"/>
<dbReference type="MANE-Select" id="ENST00000396169.7">
    <property type="protein sequence ID" value="ENSP00000379472.2"/>
    <property type="RefSeq nucleotide sequence ID" value="NM_000729.6"/>
    <property type="RefSeq protein sequence ID" value="NP_000720.1"/>
</dbReference>
<dbReference type="AGR" id="HGNC:1569"/>
<dbReference type="CTD" id="885"/>
<dbReference type="DisGeNET" id="885"/>
<dbReference type="GeneCards" id="CCK"/>
<dbReference type="HGNC" id="HGNC:1569">
    <property type="gene designation" value="CCK"/>
</dbReference>
<dbReference type="HPA" id="ENSG00000187094">
    <property type="expression patterns" value="Group enriched (brain, intestine)"/>
</dbReference>
<dbReference type="MIM" id="118440">
    <property type="type" value="gene"/>
</dbReference>
<dbReference type="neXtProt" id="NX_P06307"/>
<dbReference type="OpenTargets" id="ENSG00000187094"/>
<dbReference type="PharmGKB" id="PA26141"/>
<dbReference type="VEuPathDB" id="HostDB:ENSG00000187094"/>
<dbReference type="eggNOG" id="ENOG502S472">
    <property type="taxonomic scope" value="Eukaryota"/>
</dbReference>
<dbReference type="GeneTree" id="ENSGT00390000003571"/>
<dbReference type="HOGENOM" id="CLU_169783_0_0_1"/>
<dbReference type="InParanoid" id="P06307"/>
<dbReference type="OMA" id="YSGLCIC"/>
<dbReference type="OrthoDB" id="9862982at2759"/>
<dbReference type="PAN-GO" id="P06307">
    <property type="GO annotations" value="4 GO annotations based on evolutionary models"/>
</dbReference>
<dbReference type="PhylomeDB" id="P06307"/>
<dbReference type="TreeFam" id="TF333419"/>
<dbReference type="PathwayCommons" id="P06307"/>
<dbReference type="Reactome" id="R-HSA-375276">
    <property type="pathway name" value="Peptide ligand-binding receptors"/>
</dbReference>
<dbReference type="Reactome" id="R-HSA-416476">
    <property type="pathway name" value="G alpha (q) signalling events"/>
</dbReference>
<dbReference type="SignaLink" id="P06307"/>
<dbReference type="SIGNOR" id="P06307"/>
<dbReference type="BioGRID-ORCS" id="885">
    <property type="hits" value="15 hits in 1146 CRISPR screens"/>
</dbReference>
<dbReference type="ChiTaRS" id="CCK">
    <property type="organism name" value="human"/>
</dbReference>
<dbReference type="GeneWiki" id="Cholecystokinin"/>
<dbReference type="GenomeRNAi" id="885"/>
<dbReference type="Pharos" id="P06307">
    <property type="development level" value="Tbio"/>
</dbReference>
<dbReference type="PRO" id="PR:P06307"/>
<dbReference type="Proteomes" id="UP000005640">
    <property type="component" value="Chromosome 3"/>
</dbReference>
<dbReference type="RNAct" id="P06307">
    <property type="molecule type" value="protein"/>
</dbReference>
<dbReference type="Bgee" id="ENSG00000187094">
    <property type="expression patterns" value="Expressed in frontal pole and 125 other cell types or tissues"/>
</dbReference>
<dbReference type="ExpressionAtlas" id="P06307">
    <property type="expression patterns" value="baseline and differential"/>
</dbReference>
<dbReference type="GO" id="GO:0030424">
    <property type="term" value="C:axon"/>
    <property type="evidence" value="ECO:0000250"/>
    <property type="project" value="UniProtKB"/>
</dbReference>
<dbReference type="GO" id="GO:0005576">
    <property type="term" value="C:extracellular region"/>
    <property type="evidence" value="ECO:0000304"/>
    <property type="project" value="Reactome"/>
</dbReference>
<dbReference type="GO" id="GO:0005615">
    <property type="term" value="C:extracellular space"/>
    <property type="evidence" value="ECO:0000318"/>
    <property type="project" value="GO_Central"/>
</dbReference>
<dbReference type="GO" id="GO:0005179">
    <property type="term" value="F:hormone activity"/>
    <property type="evidence" value="ECO:0000304"/>
    <property type="project" value="ProtInc"/>
</dbReference>
<dbReference type="GO" id="GO:0005184">
    <property type="term" value="F:neuropeptide hormone activity"/>
    <property type="evidence" value="ECO:0000250"/>
    <property type="project" value="UniProtKB"/>
</dbReference>
<dbReference type="GO" id="GO:0051428">
    <property type="term" value="F:peptide hormone receptor binding"/>
    <property type="evidence" value="ECO:0000353"/>
    <property type="project" value="GO_Central"/>
</dbReference>
<dbReference type="GO" id="GO:0007409">
    <property type="term" value="P:axonogenesis"/>
    <property type="evidence" value="ECO:0000250"/>
    <property type="project" value="UniProtKB"/>
</dbReference>
<dbReference type="GO" id="GO:0038188">
    <property type="term" value="P:cholecystokinin signaling pathway"/>
    <property type="evidence" value="ECO:0007669"/>
    <property type="project" value="Ensembl"/>
</dbReference>
<dbReference type="GO" id="GO:0007586">
    <property type="term" value="P:digestion"/>
    <property type="evidence" value="ECO:0000318"/>
    <property type="project" value="GO_Central"/>
</dbReference>
<dbReference type="GO" id="GO:0042755">
    <property type="term" value="P:eating behavior"/>
    <property type="evidence" value="ECO:0000250"/>
    <property type="project" value="UniProtKB"/>
</dbReference>
<dbReference type="GO" id="GO:0001764">
    <property type="term" value="P:neuron migration"/>
    <property type="evidence" value="ECO:0000250"/>
    <property type="project" value="UniProtKB"/>
</dbReference>
<dbReference type="GO" id="GO:0007165">
    <property type="term" value="P:signal transduction"/>
    <property type="evidence" value="ECO:0000304"/>
    <property type="project" value="ProtInc"/>
</dbReference>
<dbReference type="InterPro" id="IPR015499">
    <property type="entry name" value="CCK-like"/>
</dbReference>
<dbReference type="InterPro" id="IPR001651">
    <property type="entry name" value="Gastrin/CCK"/>
</dbReference>
<dbReference type="InterPro" id="IPR013152">
    <property type="entry name" value="Gastrin/cholecystokinin_CS"/>
</dbReference>
<dbReference type="PANTHER" id="PTHR10786">
    <property type="entry name" value="CHOLECYSTOKININ"/>
    <property type="match status" value="1"/>
</dbReference>
<dbReference type="PANTHER" id="PTHR10786:SF0">
    <property type="entry name" value="CHOLECYSTOKININ"/>
    <property type="match status" value="1"/>
</dbReference>
<dbReference type="Pfam" id="PF00918">
    <property type="entry name" value="Gastrin"/>
    <property type="match status" value="1"/>
</dbReference>
<dbReference type="SMART" id="SM00029">
    <property type="entry name" value="GASTRIN"/>
    <property type="match status" value="1"/>
</dbReference>
<dbReference type="PROSITE" id="PS00259">
    <property type="entry name" value="GASTRIN"/>
    <property type="match status" value="1"/>
</dbReference>
<sequence length="115" mass="12669">MNSGVCLCVLMAVLAAGALTQPVPPADPAGSGLQRAEEAPRRQLRVSQRTDGESRAHLGALLARYIQQARKAPSGRMSIVKNLQNLDPSHRISDRDYMGWMDFGRRSAEEYEYPS</sequence>
<feature type="signal peptide" evidence="3">
    <location>
        <begin position="1"/>
        <end position="20"/>
    </location>
</feature>
<feature type="chain" id="PRO_0000010536" description="Cholecystokinin">
    <location>
        <begin position="21"/>
        <end position="115"/>
    </location>
</feature>
<feature type="propeptide" id="PRO_0000010537" evidence="2">
    <location>
        <begin position="21"/>
        <end position="44"/>
    </location>
</feature>
<feature type="peptide" id="PRO_0000010538" description="Cholecystokinin-58" evidence="2">
    <location>
        <begin position="46"/>
        <end position="103"/>
    </location>
</feature>
<feature type="peptide" id="PRO_0000306304" description="Cholecystokinin-58 desnonopeptide" evidence="2">
    <location>
        <begin position="46"/>
        <end position="94"/>
    </location>
</feature>
<feature type="peptide" id="PRO_0000010539" description="Cholecystokinin-39" evidence="2">
    <location>
        <begin position="65"/>
        <end position="103"/>
    </location>
</feature>
<feature type="peptide" id="PRO_0000010540" description="Cholecystokinin-33" evidence="2">
    <location>
        <begin position="71"/>
        <end position="103"/>
    </location>
</feature>
<feature type="peptide" id="PRO_0000306305" description="Cholecystokinin-25" evidence="2">
    <location>
        <begin position="79"/>
        <end position="103"/>
    </location>
</feature>
<feature type="peptide" id="PRO_0000306306" description="Cholecystokinin-18" evidence="2">
    <location>
        <begin position="86"/>
        <end position="103"/>
    </location>
</feature>
<feature type="peptide" id="PRO_0000010541" description="Cholecystokinin-12" evidence="1">
    <location>
        <begin position="92"/>
        <end position="103"/>
    </location>
</feature>
<feature type="peptide" id="PRO_0000010542" description="Cholecystokinin-8" evidence="2">
    <location>
        <begin position="96"/>
        <end position="103"/>
    </location>
</feature>
<feature type="peptide" id="PRO_0000306307" description="Cholecystokinin-7" evidence="2">
    <location>
        <begin position="97"/>
        <end position="103"/>
    </location>
</feature>
<feature type="peptide" id="PRO_0000306308" description="Cholecystokinin-5" evidence="2">
    <location>
        <begin position="99"/>
        <end position="103"/>
    </location>
</feature>
<feature type="propeptide" id="PRO_0000010543">
    <location>
        <begin position="107"/>
        <end position="115"/>
    </location>
</feature>
<feature type="region of interest" description="Disordered" evidence="4">
    <location>
        <begin position="23"/>
        <end position="52"/>
    </location>
</feature>
<feature type="modified residue" description="Sulfotyrosine" evidence="6">
    <location>
        <position position="97"/>
    </location>
</feature>
<feature type="modified residue" description="Phenylalanine amide" evidence="9">
    <location>
        <position position="103"/>
    </location>
</feature>
<feature type="modified residue" description="Sulfotyrosine" evidence="2">
    <location>
        <position position="111"/>
    </location>
</feature>
<feature type="modified residue" description="Sulfotyrosine" evidence="2">
    <location>
        <position position="113"/>
    </location>
</feature>
<feature type="glycosylation site" description="O-linked (Xyl...) (chondroitin sulfate) serine" evidence="7 8">
    <location>
        <position position="31"/>
    </location>
</feature>
<feature type="sequence variant" id="VAR_018818" description="In dbSNP:rs11571848." evidence="11">
    <original>G</original>
    <variation>E</variation>
    <location>
        <position position="32"/>
    </location>
</feature>
<feature type="sequence variant" id="VAR_024452" description="In dbSNP:rs3774395.">
    <original>R</original>
    <variation>W</variation>
    <location>
        <position position="95"/>
    </location>
</feature>
<feature type="mutagenesis site" description="Reduces the quantity of secreted CCK8 by 50%." evidence="6">
    <original>Y</original>
    <variation>F</variation>
    <location>
        <position position="97"/>
    </location>
</feature>
<proteinExistence type="evidence at protein level"/>
<evidence type="ECO:0000250" key="1">
    <source>
        <dbReference type="UniProtKB" id="P01356"/>
    </source>
</evidence>
<evidence type="ECO:0000250" key="2">
    <source>
        <dbReference type="UniProtKB" id="Q9TS44"/>
    </source>
</evidence>
<evidence type="ECO:0000255" key="3"/>
<evidence type="ECO:0000256" key="4">
    <source>
        <dbReference type="SAM" id="MobiDB-lite"/>
    </source>
</evidence>
<evidence type="ECO:0000269" key="5">
    <source>
    </source>
</evidence>
<evidence type="ECO:0000269" key="6">
    <source>
    </source>
</evidence>
<evidence type="ECO:0000269" key="7">
    <source>
    </source>
</evidence>
<evidence type="ECO:0000269" key="8">
    <source>
    </source>
</evidence>
<evidence type="ECO:0000269" key="9">
    <source>
    </source>
</evidence>
<evidence type="ECO:0000269" key="10">
    <source>
    </source>
</evidence>
<evidence type="ECO:0000269" key="11">
    <source ref="4"/>
</evidence>
<evidence type="ECO:0000305" key="12"/>
<gene>
    <name type="primary">CCK</name>
</gene>
<accession>P06307</accession>
<protein>
    <recommendedName>
        <fullName>Cholecystokinin</fullName>
        <shortName>CCK</shortName>
    </recommendedName>
    <component>
        <recommendedName>
            <fullName>Cholecystokinin-58</fullName>
            <shortName>CCK58</shortName>
        </recommendedName>
    </component>
    <component>
        <recommendedName>
            <fullName>Cholecystokinin-58 desnonopeptide</fullName>
        </recommendedName>
        <alternativeName>
            <fullName>(1-49)-CCK58</fullName>
        </alternativeName>
    </component>
    <component>
        <recommendedName>
            <fullName>Cholecystokinin-39</fullName>
            <shortName>CCK39</shortName>
        </recommendedName>
    </component>
    <component>
        <recommendedName>
            <fullName>Cholecystokinin-33</fullName>
            <shortName>CCK33</shortName>
        </recommendedName>
    </component>
    <component>
        <recommendedName>
            <fullName>Cholecystokinin-25</fullName>
            <shortName>CCK25</shortName>
        </recommendedName>
    </component>
    <component>
        <recommendedName>
            <fullName>Cholecystokinin-18</fullName>
            <shortName>CCK18</shortName>
        </recommendedName>
    </component>
    <component>
        <recommendedName>
            <fullName>Cholecystokinin-12</fullName>
            <shortName>CCK12</shortName>
        </recommendedName>
    </component>
    <component>
        <recommendedName>
            <fullName>Cholecystokinin-8</fullName>
            <shortName>CCK8</shortName>
        </recommendedName>
    </component>
    <component>
        <recommendedName>
            <fullName>Cholecystokinin-7</fullName>
            <shortName>CCK7</shortName>
        </recommendedName>
    </component>
    <component>
        <recommendedName>
            <fullName>Cholecystokinin-5</fullName>
            <shortName>CCK5</shortName>
        </recommendedName>
    </component>
</protein>
<name>CCKN_HUMAN</name>
<organism>
    <name type="scientific">Homo sapiens</name>
    <name type="common">Human</name>
    <dbReference type="NCBI Taxonomy" id="9606"/>
    <lineage>
        <taxon>Eukaryota</taxon>
        <taxon>Metazoa</taxon>
        <taxon>Chordata</taxon>
        <taxon>Craniata</taxon>
        <taxon>Vertebrata</taxon>
        <taxon>Euteleostomi</taxon>
        <taxon>Mammalia</taxon>
        <taxon>Eutheria</taxon>
        <taxon>Euarchontoglires</taxon>
        <taxon>Primates</taxon>
        <taxon>Haplorrhini</taxon>
        <taxon>Catarrhini</taxon>
        <taxon>Hominidae</taxon>
        <taxon>Homo</taxon>
    </lineage>
</organism>
<comment type="function">
    <text evidence="2">This peptide hormone induces gall bladder contraction and the release of pancreatic enzymes in the gut. Its function in the brain is not clear. Binding to CCK-A receptors stimulates amylase release from the pancreas, binding to CCK-B receptors stimulates gastric acid secretion.</text>
</comment>
<comment type="subunit">
    <text evidence="2">Binds to CCK-A receptors in the pancreas and CCK-B receptors in the brain.</text>
</comment>
<comment type="interaction">
    <interactant intactId="EBI-6624398">
        <id>P06307</id>
    </interactant>
    <interactant intactId="EBI-18899653">
        <id>Q6DHV7-2</id>
        <label>ADAL</label>
    </interactant>
    <organismsDiffer>false</organismsDiffer>
    <experiments>3</experiments>
</comment>
<comment type="interaction">
    <interactant intactId="EBI-6624398">
        <id>P06307</id>
    </interactant>
    <interactant intactId="EBI-10173507">
        <id>Q6UY14-3</id>
        <label>ADAMTSL4</label>
    </interactant>
    <organismsDiffer>false</organismsDiffer>
    <experiments>3</experiments>
</comment>
<comment type="interaction">
    <interactant intactId="EBI-6624398">
        <id>P06307</id>
    </interactant>
    <interactant intactId="EBI-8464238">
        <id>Q9NU02</id>
        <label>ANKEF1</label>
    </interactant>
    <organismsDiffer>false</organismsDiffer>
    <experiments>3</experiments>
</comment>
<comment type="interaction">
    <interactant intactId="EBI-6624398">
        <id>P06307</id>
    </interactant>
    <interactant intactId="EBI-5280499">
        <id>Q66PJ3-4</id>
        <label>ARL6IP4</label>
    </interactant>
    <organismsDiffer>false</organismsDiffer>
    <experiments>3</experiments>
</comment>
<comment type="interaction">
    <interactant intactId="EBI-6624398">
        <id>P06307</id>
    </interactant>
    <interactant intactId="EBI-10254793">
        <id>Q6XD76</id>
        <label>ASCL4</label>
    </interactant>
    <organismsDiffer>false</organismsDiffer>
    <experiments>3</experiments>
</comment>
<comment type="interaction">
    <interactant intactId="EBI-6624398">
        <id>P06307</id>
    </interactant>
    <interactant intactId="EBI-25836940">
        <id>C1IDX9</id>
        <label>ATG12</label>
    </interactant>
    <organismsDiffer>false</organismsDiffer>
    <experiments>3</experiments>
</comment>
<comment type="interaction">
    <interactant intactId="EBI-6624398">
        <id>P06307</id>
    </interactant>
    <interactant intactId="EBI-10693038">
        <id>Q9NSI6-4</id>
        <label>BRWD1</label>
    </interactant>
    <organismsDiffer>false</organismsDiffer>
    <experiments>3</experiments>
</comment>
<comment type="interaction">
    <interactant intactId="EBI-6624398">
        <id>P06307</id>
    </interactant>
    <interactant intactId="EBI-4392727">
        <id>O00257-3</id>
        <label>CBX4</label>
    </interactant>
    <organismsDiffer>false</organismsDiffer>
    <experiments>3</experiments>
</comment>
<comment type="interaction">
    <interactant intactId="EBI-6624398">
        <id>P06307</id>
    </interactant>
    <interactant intactId="EBI-11953200">
        <id>Q494V2-2</id>
        <label>CFAP100</label>
    </interactant>
    <organismsDiffer>false</organismsDiffer>
    <experiments>3</experiments>
</comment>
<comment type="interaction">
    <interactant intactId="EBI-6624398">
        <id>P06307</id>
    </interactant>
    <interactant intactId="EBI-749253">
        <id>Q8WUX9</id>
        <label>CHMP7</label>
    </interactant>
    <organismsDiffer>false</organismsDiffer>
    <experiments>3</experiments>
</comment>
<comment type="interaction">
    <interactant intactId="EBI-6624398">
        <id>P06307</id>
    </interactant>
    <interactant intactId="EBI-744045">
        <id>Q9Y3D0</id>
        <label>CIAO2B</label>
    </interactant>
    <organismsDiffer>false</organismsDiffer>
    <experiments>3</experiments>
</comment>
<comment type="interaction">
    <interactant intactId="EBI-6624398">
        <id>P06307</id>
    </interactant>
    <interactant intactId="EBI-2624951">
        <id>Q99966</id>
        <label>CITED1</label>
    </interactant>
    <organismsDiffer>false</organismsDiffer>
    <experiments>3</experiments>
</comment>
<comment type="interaction">
    <interactant intactId="EBI-6624398">
        <id>P06307</id>
    </interactant>
    <interactant intactId="EBI-25836908">
        <id>O95278-6</id>
        <label>EPM2A</label>
    </interactant>
    <organismsDiffer>false</organismsDiffer>
    <experiments>3</experiments>
</comment>
<comment type="interaction">
    <interactant intactId="EBI-6624398">
        <id>P06307</id>
    </interactant>
    <interactant intactId="EBI-21567429">
        <id>Q6NXG1-3</id>
        <label>ESRP1</label>
    </interactant>
    <organismsDiffer>false</organismsDiffer>
    <experiments>3</experiments>
</comment>
<comment type="interaction">
    <interactant intactId="EBI-6624398">
        <id>P06307</id>
    </interactant>
    <interactant intactId="EBI-515315">
        <id>P06241</id>
        <label>FYN</label>
    </interactant>
    <organismsDiffer>false</organismsDiffer>
    <experiments>3</experiments>
</comment>
<comment type="interaction">
    <interactant intactId="EBI-6624398">
        <id>P06307</id>
    </interactant>
    <interactant intactId="EBI-9088619">
        <id>Q06547-3</id>
        <label>GABPB1</label>
    </interactant>
    <organismsDiffer>false</organismsDiffer>
    <experiments>3</experiments>
</comment>
<comment type="interaction">
    <interactant intactId="EBI-6624398">
        <id>P06307</id>
    </interactant>
    <interactant intactId="EBI-6447217">
        <id>O75409</id>
        <label>H2AP</label>
    </interactant>
    <organismsDiffer>false</organismsDiffer>
    <experiments>3</experiments>
</comment>
<comment type="interaction">
    <interactant intactId="EBI-6624398">
        <id>P06307</id>
    </interactant>
    <interactant intactId="EBI-2868501">
        <id>Q6NXT2</id>
        <label>H3-5</label>
    </interactant>
    <organismsDiffer>false</organismsDiffer>
    <experiments>3</experiments>
</comment>
<comment type="interaction">
    <interactant intactId="EBI-6624398">
        <id>P06307</id>
    </interactant>
    <interactant intactId="EBI-10763431">
        <id>P53701</id>
        <label>HCCS</label>
    </interactant>
    <organismsDiffer>false</organismsDiffer>
    <experiments>3</experiments>
</comment>
<comment type="interaction">
    <interactant intactId="EBI-6624398">
        <id>P06307</id>
    </interactant>
    <interactant intactId="EBI-12003732">
        <id>Q9NRZ9-6</id>
        <label>HELLS</label>
    </interactant>
    <organismsDiffer>false</organismsDiffer>
    <experiments>3</experiments>
</comment>
<comment type="interaction">
    <interactant intactId="EBI-6624398">
        <id>P06307</id>
    </interactant>
    <interactant intactId="EBI-720411">
        <id>Q9UK76</id>
        <label>JPT1</label>
    </interactant>
    <organismsDiffer>false</organismsDiffer>
    <experiments>3</experiments>
</comment>
<comment type="interaction">
    <interactant intactId="EBI-6624398">
        <id>P06307</id>
    </interactant>
    <interactant intactId="EBI-8473062">
        <id>Q8N1A0</id>
        <label>KRT222</label>
    </interactant>
    <organismsDiffer>false</organismsDiffer>
    <experiments>3</experiments>
</comment>
<comment type="interaction">
    <interactant intactId="EBI-6624398">
        <id>P06307</id>
    </interactant>
    <interactant intactId="EBI-9088829">
        <id>Q6DKI2</id>
        <label>LGALS9C</label>
    </interactant>
    <organismsDiffer>false</organismsDiffer>
    <experiments>3</experiments>
</comment>
<comment type="interaction">
    <interactant intactId="EBI-6624398">
        <id>P06307</id>
    </interactant>
    <interactant intactId="EBI-25835523">
        <id>Q9H2C1</id>
        <label>LHX5</label>
    </interactant>
    <organismsDiffer>false</organismsDiffer>
    <experiments>3</experiments>
</comment>
<comment type="interaction">
    <interactant intactId="EBI-6624398">
        <id>P06307</id>
    </interactant>
    <interactant intactId="EBI-10238012">
        <id>Q16609</id>
        <label>LPAL2</label>
    </interactant>
    <organismsDiffer>false</organismsDiffer>
    <experiments>3</experiments>
</comment>
<comment type="interaction">
    <interactant intactId="EBI-6624398">
        <id>P06307</id>
    </interactant>
    <interactant intactId="EBI-2689785">
        <id>Q8NI22</id>
        <label>MCFD2</label>
    </interactant>
    <organismsDiffer>false</organismsDiffer>
    <experiments>3</experiments>
</comment>
<comment type="interaction">
    <interactant intactId="EBI-6624398">
        <id>P06307</id>
    </interactant>
    <interactant intactId="EBI-447544">
        <id>P01106</id>
        <label>MYC</label>
    </interactant>
    <organismsDiffer>false</organismsDiffer>
    <experiments>3</experiments>
</comment>
<comment type="interaction">
    <interactant intactId="EBI-6624398">
        <id>P06307</id>
    </interactant>
    <interactant intactId="EBI-11526455">
        <id>Q9UJ70-2</id>
        <label>NAGK</label>
    </interactant>
    <organismsDiffer>false</organismsDiffer>
    <experiments>3</experiments>
</comment>
<comment type="interaction">
    <interactant intactId="EBI-6624398">
        <id>P06307</id>
    </interactant>
    <interactant intactId="EBI-389728">
        <id>P25208</id>
        <label>NFYB</label>
    </interactant>
    <organismsDiffer>false</organismsDiffer>
    <experiments>3</experiments>
</comment>
<comment type="interaction">
    <interactant intactId="EBI-6624398">
        <id>P06307</id>
    </interactant>
    <interactant intactId="EBI-1059321">
        <id>Q8NFH3</id>
        <label>NUP43</label>
    </interactant>
    <organismsDiffer>false</organismsDiffer>
    <experiments>3</experiments>
</comment>
<comment type="interaction">
    <interactant intactId="EBI-6624398">
        <id>P06307</id>
    </interactant>
    <interactant intactId="EBI-741048">
        <id>Q7Z3B4</id>
        <label>NUP54</label>
    </interactant>
    <organismsDiffer>false</organismsDiffer>
    <experiments>3</experiments>
</comment>
<comment type="interaction">
    <interactant intactId="EBI-6624398">
        <id>P06307</id>
    </interactant>
    <interactant intactId="EBI-78615">
        <id>Q07869</id>
        <label>PPARA</label>
    </interactant>
    <organismsDiffer>false</organismsDiffer>
    <experiments>3</experiments>
</comment>
<comment type="interaction">
    <interactant intactId="EBI-6624398">
        <id>P06307</id>
    </interactant>
    <interactant intactId="EBI-718973">
        <id>P02775</id>
        <label>PPBP</label>
    </interactant>
    <organismsDiffer>false</organismsDiffer>
    <experiments>3</experiments>
</comment>
<comment type="interaction">
    <interactant intactId="EBI-6624398">
        <id>P06307</id>
    </interactant>
    <interactant intactId="EBI-25835994">
        <id>Q6ZMI0-5</id>
        <label>PPP1R21</label>
    </interactant>
    <organismsDiffer>false</organismsDiffer>
    <experiments>3</experiments>
</comment>
<comment type="interaction">
    <interactant intactId="EBI-6624398">
        <id>P06307</id>
    </interactant>
    <interactant intactId="EBI-25836834">
        <id>P23942</id>
        <label>PRPH2</label>
    </interactant>
    <organismsDiffer>false</organismsDiffer>
    <experiments>3</experiments>
</comment>
<comment type="interaction">
    <interactant intactId="EBI-6624398">
        <id>P06307</id>
    </interactant>
    <interactant intactId="EBI-710431">
        <id>P29074</id>
        <label>PTPN4</label>
    </interactant>
    <organismsDiffer>false</organismsDiffer>
    <experiments>3</experiments>
</comment>
<comment type="interaction">
    <interactant intactId="EBI-6624398">
        <id>P06307</id>
    </interactant>
    <interactant intactId="EBI-14065960">
        <id>Q96HR9-2</id>
        <label>REEP6</label>
    </interactant>
    <organismsDiffer>false</organismsDiffer>
    <experiments>3</experiments>
</comment>
<comment type="interaction">
    <interactant intactId="EBI-6624398">
        <id>P06307</id>
    </interactant>
    <interactant intactId="EBI-73886">
        <id>Q04206</id>
        <label>RELA</label>
    </interactant>
    <organismsDiffer>false</organismsDiffer>
    <experiments>3</experiments>
</comment>
<comment type="interaction">
    <interactant intactId="EBI-6624398">
        <id>P06307</id>
    </interactant>
    <interactant intactId="EBI-25834767">
        <id>P47804-3</id>
        <label>RGR</label>
    </interactant>
    <organismsDiffer>false</organismsDiffer>
    <experiments>3</experiments>
</comment>
<comment type="interaction">
    <interactant intactId="EBI-6624398">
        <id>P06307</id>
    </interactant>
    <interactant intactId="EBI-1055287">
        <id>Q15382</id>
        <label>RHEB</label>
    </interactant>
    <organismsDiffer>false</organismsDiffer>
    <experiments>3</experiments>
</comment>
<comment type="interaction">
    <interactant intactId="EBI-6624398">
        <id>P06307</id>
    </interactant>
    <interactant intactId="EBI-354303">
        <id>P62701</id>
        <label>RPS4X</label>
    </interactant>
    <organismsDiffer>false</organismsDiffer>
    <experiments>3</experiments>
</comment>
<comment type="interaction">
    <interactant intactId="EBI-6624398">
        <id>P06307</id>
    </interactant>
    <interactant intactId="EBI-10248967">
        <id>Q66K80</id>
        <label>RUSC1-AS1</label>
    </interactant>
    <organismsDiffer>false</organismsDiffer>
    <experiments>3</experiments>
</comment>
<comment type="interaction">
    <interactant intactId="EBI-6624398">
        <id>P06307</id>
    </interactant>
    <interactant intactId="EBI-747389">
        <id>Q7L8J4</id>
        <label>SH3BP5L</label>
    </interactant>
    <organismsDiffer>false</organismsDiffer>
    <experiments>3</experiments>
</comment>
<comment type="interaction">
    <interactant intactId="EBI-6624398">
        <id>P06307</id>
    </interactant>
    <interactant intactId="EBI-2822550">
        <id>Q8IYM2</id>
        <label>SLFN12</label>
    </interactant>
    <organismsDiffer>false</organismsDiffer>
    <experiments>3</experiments>
</comment>
<comment type="interaction">
    <interactant intactId="EBI-6624398">
        <id>P06307</id>
    </interactant>
    <interactant intactId="EBI-354861">
        <id>Q9C004</id>
        <label>SPRY4</label>
    </interactant>
    <organismsDiffer>false</organismsDiffer>
    <experiments>3</experiments>
</comment>
<comment type="interaction">
    <interactant intactId="EBI-6624398">
        <id>P06307</id>
    </interactant>
    <interactant intactId="EBI-12408727">
        <id>Q5W111-2</id>
        <label>SPRYD7</label>
    </interactant>
    <organismsDiffer>false</organismsDiffer>
    <experiments>3</experiments>
</comment>
<comment type="interaction">
    <interactant intactId="EBI-6624398">
        <id>P06307</id>
    </interactant>
    <interactant intactId="EBI-2659201">
        <id>Q96BD6</id>
        <label>SPSB1</label>
    </interactant>
    <organismsDiffer>false</organismsDiffer>
    <experiments>3</experiments>
</comment>
<comment type="interaction">
    <interactant intactId="EBI-6624398">
        <id>P06307</id>
    </interactant>
    <interactant intactId="EBI-21560407">
        <id>Q92797-2</id>
        <label>SYMPK</label>
    </interactant>
    <organismsDiffer>false</organismsDiffer>
    <experiments>3</experiments>
</comment>
<comment type="interaction">
    <interactant intactId="EBI-6624398">
        <id>P06307</id>
    </interactant>
    <interactant intactId="EBI-2340619">
        <id>P62253</id>
        <label>UBE2G1</label>
    </interactant>
    <organismsDiffer>false</organismsDiffer>
    <experiments>3</experiments>
</comment>
<comment type="interaction">
    <interactant intactId="EBI-6624398">
        <id>P06307</id>
    </interactant>
    <interactant intactId="EBI-947187">
        <id>Q9UHD9</id>
        <label>UBQLN2</label>
    </interactant>
    <organismsDiffer>false</organismsDiffer>
    <experiments>3</experiments>
</comment>
<comment type="interaction">
    <interactant intactId="EBI-6624398">
        <id>P06307</id>
    </interactant>
    <interactant intactId="EBI-25835297">
        <id>Q9P1Q0-4</id>
        <label>VPS54</label>
    </interactant>
    <organismsDiffer>false</organismsDiffer>
    <experiments>3</experiments>
</comment>
<comment type="interaction">
    <interactant intactId="EBI-6624398">
        <id>P06307</id>
    </interactant>
    <interactant intactId="EBI-10316321">
        <id>Q9NX94</id>
        <label>WBP1L</label>
    </interactant>
    <organismsDiffer>false</organismsDiffer>
    <experiments>3</experiments>
</comment>
<comment type="interaction">
    <interactant intactId="EBI-6624398">
        <id>P06307</id>
    </interactant>
    <interactant intactId="EBI-12956041">
        <id>Q8IWT0-2</id>
        <label>ZBTB8OS</label>
    </interactant>
    <organismsDiffer>false</organismsDiffer>
    <experiments>3</experiments>
</comment>
<comment type="interaction">
    <interactant intactId="EBI-6624398">
        <id>P06307</id>
    </interactant>
    <interactant intactId="EBI-14104088">
        <id>Q53FD0-2</id>
        <label>ZC2HC1C</label>
    </interactant>
    <organismsDiffer>false</organismsDiffer>
    <experiments>3</experiments>
</comment>
<comment type="interaction">
    <interactant intactId="EBI-6624398">
        <id>P06307</id>
    </interactant>
    <interactant intactId="EBI-25835852">
        <id>Q96JL9-2</id>
        <label>ZNF333</label>
    </interactant>
    <organismsDiffer>false</organismsDiffer>
    <experiments>3</experiments>
</comment>
<comment type="interaction">
    <interactant intactId="EBI-6624436">
        <id>PRO_0000010542</id>
    </interactant>
    <interactant intactId="EBI-1753137">
        <id>P32239</id>
        <label>CCKBR</label>
    </interactant>
    <organismsDiffer>false</organismsDiffer>
    <experiments>2</experiments>
</comment>
<comment type="subcellular location">
    <subcellularLocation>
        <location evidence="7 8">Secreted</location>
    </subcellularLocation>
</comment>
<comment type="tissue specificity">
    <text evidence="7 8">Detected in cerebrospinal fluid and urine (at protein level).</text>
</comment>
<comment type="PTM">
    <text>The precursor is cleaved by proteases to produce a number of active cholecystokinins.</text>
</comment>
<comment type="PTM">
    <molecule>Cholecystokinin-5</molecule>
    <text evidence="5 10">The precursor is cleaved by ACE, which removes the Gly-Arg-Arg peptide at the C-terminus, leading to mature hormone.</text>
</comment>
<comment type="similarity">
    <text evidence="12">Belongs to the gastrin/cholecystokinin family.</text>
</comment>
<comment type="online information" name="Wikipedia">
    <link uri="https://en.wikipedia.org/wiki/Cholecystokinin"/>
    <text>Cholecystokinin entry</text>
</comment>